<gene>
    <name evidence="1" type="primary">queA</name>
    <name type="ordered locus">Swit_0025</name>
</gene>
<dbReference type="EC" id="2.4.99.17" evidence="1"/>
<dbReference type="EMBL" id="CP000699">
    <property type="protein sequence ID" value="ABQ66398.1"/>
    <property type="molecule type" value="Genomic_DNA"/>
</dbReference>
<dbReference type="SMR" id="A5V282"/>
<dbReference type="STRING" id="392499.Swit_0025"/>
<dbReference type="PaxDb" id="392499-Swit_0025"/>
<dbReference type="KEGG" id="swi:Swit_0025"/>
<dbReference type="eggNOG" id="COG0809">
    <property type="taxonomic scope" value="Bacteria"/>
</dbReference>
<dbReference type="HOGENOM" id="CLU_039110_1_1_5"/>
<dbReference type="OrthoDB" id="9805933at2"/>
<dbReference type="UniPathway" id="UPA00392"/>
<dbReference type="Proteomes" id="UP000001989">
    <property type="component" value="Chromosome"/>
</dbReference>
<dbReference type="GO" id="GO:0005737">
    <property type="term" value="C:cytoplasm"/>
    <property type="evidence" value="ECO:0007669"/>
    <property type="project" value="UniProtKB-SubCell"/>
</dbReference>
<dbReference type="GO" id="GO:0051075">
    <property type="term" value="F:S-adenosylmethionine:tRNA ribosyltransferase-isomerase activity"/>
    <property type="evidence" value="ECO:0007669"/>
    <property type="project" value="UniProtKB-EC"/>
</dbReference>
<dbReference type="GO" id="GO:0008616">
    <property type="term" value="P:queuosine biosynthetic process"/>
    <property type="evidence" value="ECO:0007669"/>
    <property type="project" value="UniProtKB-UniRule"/>
</dbReference>
<dbReference type="GO" id="GO:0002099">
    <property type="term" value="P:tRNA wobble guanine modification"/>
    <property type="evidence" value="ECO:0007669"/>
    <property type="project" value="TreeGrafter"/>
</dbReference>
<dbReference type="Gene3D" id="2.40.10.240">
    <property type="entry name" value="QueA-like"/>
    <property type="match status" value="1"/>
</dbReference>
<dbReference type="Gene3D" id="3.40.1780.10">
    <property type="entry name" value="QueA-like"/>
    <property type="match status" value="1"/>
</dbReference>
<dbReference type="HAMAP" id="MF_00113">
    <property type="entry name" value="QueA"/>
    <property type="match status" value="1"/>
</dbReference>
<dbReference type="InterPro" id="IPR003699">
    <property type="entry name" value="QueA"/>
</dbReference>
<dbReference type="InterPro" id="IPR042118">
    <property type="entry name" value="QueA_dom1"/>
</dbReference>
<dbReference type="InterPro" id="IPR042119">
    <property type="entry name" value="QueA_dom2"/>
</dbReference>
<dbReference type="InterPro" id="IPR036100">
    <property type="entry name" value="QueA_sf"/>
</dbReference>
<dbReference type="NCBIfam" id="NF001140">
    <property type="entry name" value="PRK00147.1"/>
    <property type="match status" value="1"/>
</dbReference>
<dbReference type="NCBIfam" id="TIGR00113">
    <property type="entry name" value="queA"/>
    <property type="match status" value="1"/>
</dbReference>
<dbReference type="PANTHER" id="PTHR30307">
    <property type="entry name" value="S-ADENOSYLMETHIONINE:TRNA RIBOSYLTRANSFERASE-ISOMERASE"/>
    <property type="match status" value="1"/>
</dbReference>
<dbReference type="PANTHER" id="PTHR30307:SF0">
    <property type="entry name" value="S-ADENOSYLMETHIONINE:TRNA RIBOSYLTRANSFERASE-ISOMERASE"/>
    <property type="match status" value="1"/>
</dbReference>
<dbReference type="Pfam" id="PF02547">
    <property type="entry name" value="Queuosine_synth"/>
    <property type="match status" value="1"/>
</dbReference>
<dbReference type="SUPFAM" id="SSF111337">
    <property type="entry name" value="QueA-like"/>
    <property type="match status" value="1"/>
</dbReference>
<name>QUEA_RHIWR</name>
<reference key="1">
    <citation type="journal article" date="2010" name="J. Bacteriol.">
        <title>Genome sequence of the dioxin-mineralizing bacterium Sphingomonas wittichii RW1.</title>
        <authorList>
            <person name="Miller T.R."/>
            <person name="Delcher A.L."/>
            <person name="Salzberg S.L."/>
            <person name="Saunders E."/>
            <person name="Detter J.C."/>
            <person name="Halden R.U."/>
        </authorList>
    </citation>
    <scope>NUCLEOTIDE SEQUENCE [LARGE SCALE GENOMIC DNA]</scope>
    <source>
        <strain>DSM 6014 / CCUG 31198 / JCM 15750 / NBRC 105917 / EY 4224 / RW1</strain>
    </source>
</reference>
<comment type="function">
    <text evidence="1">Transfers and isomerizes the ribose moiety from AdoMet to the 7-aminomethyl group of 7-deazaguanine (preQ1-tRNA) to give epoxyqueuosine (oQ-tRNA).</text>
</comment>
<comment type="catalytic activity">
    <reaction evidence="1">
        <text>7-aminomethyl-7-carbaguanosine(34) in tRNA + S-adenosyl-L-methionine = epoxyqueuosine(34) in tRNA + adenine + L-methionine + 2 H(+)</text>
        <dbReference type="Rhea" id="RHEA:32155"/>
        <dbReference type="Rhea" id="RHEA-COMP:10342"/>
        <dbReference type="Rhea" id="RHEA-COMP:18582"/>
        <dbReference type="ChEBI" id="CHEBI:15378"/>
        <dbReference type="ChEBI" id="CHEBI:16708"/>
        <dbReference type="ChEBI" id="CHEBI:57844"/>
        <dbReference type="ChEBI" id="CHEBI:59789"/>
        <dbReference type="ChEBI" id="CHEBI:82833"/>
        <dbReference type="ChEBI" id="CHEBI:194443"/>
        <dbReference type="EC" id="2.4.99.17"/>
    </reaction>
</comment>
<comment type="pathway">
    <text evidence="1">tRNA modification; tRNA-queuosine biosynthesis.</text>
</comment>
<comment type="subunit">
    <text evidence="1">Monomer.</text>
</comment>
<comment type="subcellular location">
    <subcellularLocation>
        <location evidence="1">Cytoplasm</location>
    </subcellularLocation>
</comment>
<comment type="similarity">
    <text evidence="1">Belongs to the QueA family.</text>
</comment>
<evidence type="ECO:0000255" key="1">
    <source>
        <dbReference type="HAMAP-Rule" id="MF_00113"/>
    </source>
</evidence>
<accession>A5V282</accession>
<proteinExistence type="inferred from homology"/>
<sequence length="344" mass="37438">MRVDLFDFDLPPENIALRPASPRDSARMLLVEGSEGALADRHVSDLPGLLRVGDCLVFNDTRVIPAQLEGRRGEARIGATLHKREGLRQWRAFVRNAKRVRTGDRIDFGAGVSAIAAERGEDGSILLDFEGDEPVELLLERAGTMPLPPYIAGKRPTDDRDRDDYQTMFAREKGAVAAPTAALHFTPRLMEALAAAGIASETLTLHVGAGTFLPVKADDTDDHRMHAEWGRIDAATADHLNAIRAAGGRVIAVGTTSLRLLESATGEDGVIRPFDGDTAIFITPGYRFRAIDGLMTNFHLPKSTLFMLVSALMGRDRMQAAYAHAIAEGYRFYSYGDSSLLLPG</sequence>
<keyword id="KW-0963">Cytoplasm</keyword>
<keyword id="KW-0671">Queuosine biosynthesis</keyword>
<keyword id="KW-1185">Reference proteome</keyword>
<keyword id="KW-0949">S-adenosyl-L-methionine</keyword>
<keyword id="KW-0808">Transferase</keyword>
<organism>
    <name type="scientific">Rhizorhabdus wittichii (strain DSM 6014 / CCUG 31198 / JCM 15750 / NBRC 105917 / EY 4224 / RW1)</name>
    <name type="common">Sphingomonas wittichii</name>
    <dbReference type="NCBI Taxonomy" id="392499"/>
    <lineage>
        <taxon>Bacteria</taxon>
        <taxon>Pseudomonadati</taxon>
        <taxon>Pseudomonadota</taxon>
        <taxon>Alphaproteobacteria</taxon>
        <taxon>Sphingomonadales</taxon>
        <taxon>Sphingomonadaceae</taxon>
        <taxon>Rhizorhabdus</taxon>
    </lineage>
</organism>
<protein>
    <recommendedName>
        <fullName evidence="1">S-adenosylmethionine:tRNA ribosyltransferase-isomerase</fullName>
        <ecNumber evidence="1">2.4.99.17</ecNumber>
    </recommendedName>
    <alternativeName>
        <fullName evidence="1">Queuosine biosynthesis protein QueA</fullName>
    </alternativeName>
</protein>
<feature type="chain" id="PRO_1000015284" description="S-adenosylmethionine:tRNA ribosyltransferase-isomerase">
    <location>
        <begin position="1"/>
        <end position="344"/>
    </location>
</feature>